<reference key="1">
    <citation type="journal article" date="2005" name="Science">
        <title>The genome of the basidiomycetous yeast and human pathogen Cryptococcus neoformans.</title>
        <authorList>
            <person name="Loftus B.J."/>
            <person name="Fung E."/>
            <person name="Roncaglia P."/>
            <person name="Rowley D."/>
            <person name="Amedeo P."/>
            <person name="Bruno D."/>
            <person name="Vamathevan J."/>
            <person name="Miranda M."/>
            <person name="Anderson I.J."/>
            <person name="Fraser J.A."/>
            <person name="Allen J.E."/>
            <person name="Bosdet I.E."/>
            <person name="Brent M.R."/>
            <person name="Chiu R."/>
            <person name="Doering T.L."/>
            <person name="Donlin M.J."/>
            <person name="D'Souza C.A."/>
            <person name="Fox D.S."/>
            <person name="Grinberg V."/>
            <person name="Fu J."/>
            <person name="Fukushima M."/>
            <person name="Haas B.J."/>
            <person name="Huang J.C."/>
            <person name="Janbon G."/>
            <person name="Jones S.J.M."/>
            <person name="Koo H.L."/>
            <person name="Krzywinski M.I."/>
            <person name="Kwon-Chung K.J."/>
            <person name="Lengeler K.B."/>
            <person name="Maiti R."/>
            <person name="Marra M.A."/>
            <person name="Marra R.E."/>
            <person name="Mathewson C.A."/>
            <person name="Mitchell T.G."/>
            <person name="Pertea M."/>
            <person name="Riggs F.R."/>
            <person name="Salzberg S.L."/>
            <person name="Schein J.E."/>
            <person name="Shvartsbeyn A."/>
            <person name="Shin H."/>
            <person name="Shumway M."/>
            <person name="Specht C.A."/>
            <person name="Suh B.B."/>
            <person name="Tenney A."/>
            <person name="Utterback T.R."/>
            <person name="Wickes B.L."/>
            <person name="Wortman J.R."/>
            <person name="Wye N.H."/>
            <person name="Kronstad J.W."/>
            <person name="Lodge J.K."/>
            <person name="Heitman J."/>
            <person name="Davis R.W."/>
            <person name="Fraser C.M."/>
            <person name="Hyman R.W."/>
        </authorList>
    </citation>
    <scope>NUCLEOTIDE SEQUENCE [LARGE SCALE GENOMIC DNA]</scope>
    <source>
        <strain>JEC21 / ATCC MYA-565</strain>
    </source>
</reference>
<feature type="chain" id="PRO_0000397631" description="rRNA biogenesis protein RRP36">
    <location>
        <begin position="1"/>
        <end position="401"/>
    </location>
</feature>
<feature type="region of interest" description="Disordered" evidence="3">
    <location>
        <begin position="1"/>
        <end position="245"/>
    </location>
</feature>
<feature type="region of interest" description="Disordered" evidence="3">
    <location>
        <begin position="358"/>
        <end position="401"/>
    </location>
</feature>
<feature type="coiled-coil region" evidence="2">
    <location>
        <begin position="257"/>
        <end position="313"/>
    </location>
</feature>
<feature type="compositionally biased region" description="Polar residues" evidence="3">
    <location>
        <begin position="1"/>
        <end position="10"/>
    </location>
</feature>
<feature type="compositionally biased region" description="Acidic residues" evidence="3">
    <location>
        <begin position="27"/>
        <end position="42"/>
    </location>
</feature>
<feature type="compositionally biased region" description="Acidic residues" evidence="3">
    <location>
        <begin position="52"/>
        <end position="78"/>
    </location>
</feature>
<feature type="compositionally biased region" description="Acidic residues" evidence="3">
    <location>
        <begin position="86"/>
        <end position="106"/>
    </location>
</feature>
<feature type="compositionally biased region" description="Low complexity" evidence="3">
    <location>
        <begin position="109"/>
        <end position="141"/>
    </location>
</feature>
<feature type="compositionally biased region" description="Basic residues" evidence="3">
    <location>
        <begin position="367"/>
        <end position="383"/>
    </location>
</feature>
<accession>P0CR20</accession>
<accession>Q55PM8</accession>
<accession>Q5KDS8</accession>
<gene>
    <name type="primary">RRP36</name>
    <name type="ordered locus">CNG02910</name>
</gene>
<proteinExistence type="inferred from homology"/>
<name>RRP36_CRYNJ</name>
<keyword id="KW-0175">Coiled coil</keyword>
<keyword id="KW-0539">Nucleus</keyword>
<keyword id="KW-1185">Reference proteome</keyword>
<keyword id="KW-0687">Ribonucleoprotein</keyword>
<keyword id="KW-0690">Ribosome biogenesis</keyword>
<keyword id="KW-0698">rRNA processing</keyword>
<protein>
    <recommendedName>
        <fullName>rRNA biogenesis protein RRP36</fullName>
    </recommendedName>
    <alternativeName>
        <fullName>Ribosomal RNA-processing protein 36</fullName>
    </alternativeName>
</protein>
<sequence>MVTASSSKATGATRLKQANKAVKEPSPDDEFLESDSEVDEFAEGFQPGLAEEYSDDDDDDEGKEDDGEGYGYEESEEEGNAKWEPDNWDGNEDTVSESGSDDDEDAELRNLQNNLNSLPLSTLAKAQKSLSRKSSSSSSNGRSKEEKLALMKSKLAQMQRSKGKAVAVPDTDSHRFGSRAQESDEESDSGPETTSSTKRGSKHAPAALSTKKQVSRKRQVIEVPKPERRDPRFSSVSAGHANADLHSKSYSFLPDLLRQEFSGLKEAVAAAKKAEKNCPWAEKPMRTAERERLEVQMGQVRTKLVRTEKEAMEREVLAKAKKEEREKRTQGKAAWFMKKGEKKDLLLKARFETLEKQGGKTAVKKLVEKKRKKLASKEKKSRPFAKGAEGMGRDTKRRRVA</sequence>
<comment type="function">
    <text evidence="1">Component of the 90S pre-ribosome involved in the maturation of rRNAs. Required for early cleavages of the pre-RNAs in the 40S ribosomal subunit maturation pathway (By similarity).</text>
</comment>
<comment type="subunit">
    <text evidence="1">Associates with 90S and pre-40S pre-ribosomal particles.</text>
</comment>
<comment type="subcellular location">
    <subcellularLocation>
        <location evidence="1">Nucleus</location>
        <location evidence="1">Nucleolus</location>
    </subcellularLocation>
</comment>
<comment type="similarity">
    <text evidence="4">Belongs to the RRP36 family.</text>
</comment>
<organism>
    <name type="scientific">Cryptococcus neoformans var. neoformans serotype D (strain JEC21 / ATCC MYA-565)</name>
    <name type="common">Filobasidiella neoformans</name>
    <dbReference type="NCBI Taxonomy" id="214684"/>
    <lineage>
        <taxon>Eukaryota</taxon>
        <taxon>Fungi</taxon>
        <taxon>Dikarya</taxon>
        <taxon>Basidiomycota</taxon>
        <taxon>Agaricomycotina</taxon>
        <taxon>Tremellomycetes</taxon>
        <taxon>Tremellales</taxon>
        <taxon>Cryptococcaceae</taxon>
        <taxon>Cryptococcus</taxon>
        <taxon>Cryptococcus neoformans species complex</taxon>
    </lineage>
</organism>
<evidence type="ECO:0000250" key="1"/>
<evidence type="ECO:0000255" key="2"/>
<evidence type="ECO:0000256" key="3">
    <source>
        <dbReference type="SAM" id="MobiDB-lite"/>
    </source>
</evidence>
<evidence type="ECO:0000305" key="4"/>
<dbReference type="EMBL" id="AE017347">
    <property type="protein sequence ID" value="AAW44672.2"/>
    <property type="molecule type" value="Genomic_DNA"/>
</dbReference>
<dbReference type="RefSeq" id="XP_571979.1">
    <property type="nucleotide sequence ID" value="XM_571979.1"/>
</dbReference>
<dbReference type="SMR" id="P0CR20"/>
<dbReference type="FunCoup" id="P0CR20">
    <property type="interactions" value="287"/>
</dbReference>
<dbReference type="STRING" id="214684.P0CR20"/>
<dbReference type="PaxDb" id="214684-P0CR20"/>
<dbReference type="eggNOG" id="KOG3190">
    <property type="taxonomic scope" value="Eukaryota"/>
</dbReference>
<dbReference type="HOGENOM" id="CLU_048802_1_1_1"/>
<dbReference type="InParanoid" id="P0CR20"/>
<dbReference type="Proteomes" id="UP000002149">
    <property type="component" value="Chromosome 7"/>
</dbReference>
<dbReference type="GO" id="GO:0030686">
    <property type="term" value="C:90S preribosome"/>
    <property type="evidence" value="ECO:0000318"/>
    <property type="project" value="GO_Central"/>
</dbReference>
<dbReference type="GO" id="GO:0005730">
    <property type="term" value="C:nucleolus"/>
    <property type="evidence" value="ECO:0000318"/>
    <property type="project" value="GO_Central"/>
</dbReference>
<dbReference type="GO" id="GO:0000462">
    <property type="term" value="P:maturation of SSU-rRNA from tricistronic rRNA transcript (SSU-rRNA, 5.8S rRNA, LSU-rRNA)"/>
    <property type="evidence" value="ECO:0000318"/>
    <property type="project" value="GO_Central"/>
</dbReference>
<dbReference type="InterPro" id="IPR009292">
    <property type="entry name" value="RRP36"/>
</dbReference>
<dbReference type="PANTHER" id="PTHR21738">
    <property type="entry name" value="RIBOSOMAL RNA PROCESSING PROTEIN 36 HOMOLOG"/>
    <property type="match status" value="1"/>
</dbReference>
<dbReference type="PANTHER" id="PTHR21738:SF0">
    <property type="entry name" value="RIBOSOMAL RNA PROCESSING PROTEIN 36 HOMOLOG"/>
    <property type="match status" value="1"/>
</dbReference>
<dbReference type="Pfam" id="PF06102">
    <property type="entry name" value="RRP36"/>
    <property type="match status" value="1"/>
</dbReference>